<keyword id="KW-0963">Cytoplasm</keyword>
<keyword id="KW-0369">Histidine metabolism</keyword>
<keyword id="KW-0378">Hydrolase</keyword>
<keyword id="KW-0408">Iron</keyword>
<keyword id="KW-0479">Metal-binding</keyword>
<keyword id="KW-0862">Zinc</keyword>
<sequence length="427" mass="45338">MPHADQLITNIGRLVTGPQAPLRGQQLAQLTAIDQAVVAVQAGNIVALGSQAELSAWTADQTIDAGGYLAIPGFVDPHTHACYAGDRAHEFELRIKGASYSELMAAGGGIMSTVHATRAASKAELVAQTRPRLDQLLAHGTTTVEIKSGYGLDTATELTMLEAIAELAQTHPIGIVPTFMGAHAIPAEYRDNPEAFVDLVVDEMLPAVAAWWQQQTIWQEPLACDIFCENGAFSVAQSQRILVKAKALGFRLKLHVDEFEPLGGTPLAVELGAISVDHLVATPPEHIAILANSETVGVSLPGTPFGLGKSQFSPARSLIEANGILALATDCNPGTSPCESMPMAIAIACRYLRLTPAEALNAATVNSAFAIRQHERVGSLAVGMQADLALLNLPDERHIGYKFGTNPVAIVIKTGRVVRRNQLHADR</sequence>
<gene>
    <name evidence="1" type="primary">hutI</name>
    <name type="ordered locus">Haur_0607</name>
</gene>
<organism>
    <name type="scientific">Herpetosiphon aurantiacus (strain ATCC 23779 / DSM 785 / 114-95)</name>
    <dbReference type="NCBI Taxonomy" id="316274"/>
    <lineage>
        <taxon>Bacteria</taxon>
        <taxon>Bacillati</taxon>
        <taxon>Chloroflexota</taxon>
        <taxon>Chloroflexia</taxon>
        <taxon>Herpetosiphonales</taxon>
        <taxon>Herpetosiphonaceae</taxon>
        <taxon>Herpetosiphon</taxon>
    </lineage>
</organism>
<feature type="chain" id="PRO_1000121544" description="Imidazolonepropionase">
    <location>
        <begin position="1"/>
        <end position="427"/>
    </location>
</feature>
<feature type="binding site" evidence="1">
    <location>
        <position position="78"/>
    </location>
    <ligand>
        <name>Fe(3+)</name>
        <dbReference type="ChEBI" id="CHEBI:29034"/>
    </ligand>
</feature>
<feature type="binding site" evidence="1">
    <location>
        <position position="78"/>
    </location>
    <ligand>
        <name>Zn(2+)</name>
        <dbReference type="ChEBI" id="CHEBI:29105"/>
    </ligand>
</feature>
<feature type="binding site" evidence="1">
    <location>
        <position position="80"/>
    </location>
    <ligand>
        <name>Fe(3+)</name>
        <dbReference type="ChEBI" id="CHEBI:29034"/>
    </ligand>
</feature>
<feature type="binding site" evidence="1">
    <location>
        <position position="80"/>
    </location>
    <ligand>
        <name>Zn(2+)</name>
        <dbReference type="ChEBI" id="CHEBI:29105"/>
    </ligand>
</feature>
<feature type="binding site" evidence="1">
    <location>
        <position position="87"/>
    </location>
    <ligand>
        <name>4-imidazolone-5-propanoate</name>
        <dbReference type="ChEBI" id="CHEBI:77893"/>
    </ligand>
</feature>
<feature type="binding site" evidence="1">
    <location>
        <position position="150"/>
    </location>
    <ligand>
        <name>4-imidazolone-5-propanoate</name>
        <dbReference type="ChEBI" id="CHEBI:77893"/>
    </ligand>
</feature>
<feature type="binding site" evidence="1">
    <location>
        <position position="150"/>
    </location>
    <ligand>
        <name>N-formimidoyl-L-glutamate</name>
        <dbReference type="ChEBI" id="CHEBI:58928"/>
    </ligand>
</feature>
<feature type="binding site" evidence="1">
    <location>
        <position position="183"/>
    </location>
    <ligand>
        <name>4-imidazolone-5-propanoate</name>
        <dbReference type="ChEBI" id="CHEBI:77893"/>
    </ligand>
</feature>
<feature type="binding site" evidence="1">
    <location>
        <position position="255"/>
    </location>
    <ligand>
        <name>Fe(3+)</name>
        <dbReference type="ChEBI" id="CHEBI:29034"/>
    </ligand>
</feature>
<feature type="binding site" evidence="1">
    <location>
        <position position="255"/>
    </location>
    <ligand>
        <name>Zn(2+)</name>
        <dbReference type="ChEBI" id="CHEBI:29105"/>
    </ligand>
</feature>
<feature type="binding site" evidence="1">
    <location>
        <position position="258"/>
    </location>
    <ligand>
        <name>4-imidazolone-5-propanoate</name>
        <dbReference type="ChEBI" id="CHEBI:77893"/>
    </ligand>
</feature>
<feature type="binding site" evidence="1">
    <location>
        <position position="330"/>
    </location>
    <ligand>
        <name>Fe(3+)</name>
        <dbReference type="ChEBI" id="CHEBI:29034"/>
    </ligand>
</feature>
<feature type="binding site" evidence="1">
    <location>
        <position position="330"/>
    </location>
    <ligand>
        <name>Zn(2+)</name>
        <dbReference type="ChEBI" id="CHEBI:29105"/>
    </ligand>
</feature>
<feature type="binding site" evidence="1">
    <location>
        <position position="332"/>
    </location>
    <ligand>
        <name>N-formimidoyl-L-glutamate</name>
        <dbReference type="ChEBI" id="CHEBI:58928"/>
    </ligand>
</feature>
<feature type="binding site" evidence="1">
    <location>
        <position position="334"/>
    </location>
    <ligand>
        <name>N-formimidoyl-L-glutamate</name>
        <dbReference type="ChEBI" id="CHEBI:58928"/>
    </ligand>
</feature>
<feature type="binding site" evidence="1">
    <location>
        <position position="335"/>
    </location>
    <ligand>
        <name>4-imidazolone-5-propanoate</name>
        <dbReference type="ChEBI" id="CHEBI:77893"/>
    </ligand>
</feature>
<accession>A9AW17</accession>
<comment type="function">
    <text evidence="1">Catalyzes the hydrolytic cleavage of the carbon-nitrogen bond in imidazolone-5-propanoate to yield N-formimidoyl-L-glutamate. It is the third step in the universal histidine degradation pathway.</text>
</comment>
<comment type="catalytic activity">
    <reaction evidence="1">
        <text>4-imidazolone-5-propanoate + H2O = N-formimidoyl-L-glutamate</text>
        <dbReference type="Rhea" id="RHEA:23660"/>
        <dbReference type="ChEBI" id="CHEBI:15377"/>
        <dbReference type="ChEBI" id="CHEBI:58928"/>
        <dbReference type="ChEBI" id="CHEBI:77893"/>
        <dbReference type="EC" id="3.5.2.7"/>
    </reaction>
</comment>
<comment type="cofactor">
    <cofactor evidence="1">
        <name>Zn(2+)</name>
        <dbReference type="ChEBI" id="CHEBI:29105"/>
    </cofactor>
    <cofactor evidence="1">
        <name>Fe(3+)</name>
        <dbReference type="ChEBI" id="CHEBI:29034"/>
    </cofactor>
    <text evidence="1">Binds 1 zinc or iron ion per subunit.</text>
</comment>
<comment type="pathway">
    <text evidence="1">Amino-acid degradation; L-histidine degradation into L-glutamate; N-formimidoyl-L-glutamate from L-histidine: step 3/3.</text>
</comment>
<comment type="subcellular location">
    <subcellularLocation>
        <location evidence="1">Cytoplasm</location>
    </subcellularLocation>
</comment>
<comment type="similarity">
    <text evidence="1">Belongs to the metallo-dependent hydrolases superfamily. HutI family.</text>
</comment>
<dbReference type="EC" id="3.5.2.7" evidence="1"/>
<dbReference type="EMBL" id="CP000875">
    <property type="protein sequence ID" value="ABX03255.1"/>
    <property type="molecule type" value="Genomic_DNA"/>
</dbReference>
<dbReference type="SMR" id="A9AW17"/>
<dbReference type="FunCoup" id="A9AW17">
    <property type="interactions" value="44"/>
</dbReference>
<dbReference type="STRING" id="316274.Haur_0607"/>
<dbReference type="KEGG" id="hau:Haur_0607"/>
<dbReference type="eggNOG" id="COG1228">
    <property type="taxonomic scope" value="Bacteria"/>
</dbReference>
<dbReference type="HOGENOM" id="CLU_041647_0_1_0"/>
<dbReference type="InParanoid" id="A9AW17"/>
<dbReference type="UniPathway" id="UPA00379">
    <property type="reaction ID" value="UER00551"/>
</dbReference>
<dbReference type="Proteomes" id="UP000000787">
    <property type="component" value="Chromosome"/>
</dbReference>
<dbReference type="GO" id="GO:0005737">
    <property type="term" value="C:cytoplasm"/>
    <property type="evidence" value="ECO:0007669"/>
    <property type="project" value="UniProtKB-SubCell"/>
</dbReference>
<dbReference type="GO" id="GO:0050480">
    <property type="term" value="F:imidazolonepropionase activity"/>
    <property type="evidence" value="ECO:0007669"/>
    <property type="project" value="UniProtKB-UniRule"/>
</dbReference>
<dbReference type="GO" id="GO:0005506">
    <property type="term" value="F:iron ion binding"/>
    <property type="evidence" value="ECO:0007669"/>
    <property type="project" value="UniProtKB-UniRule"/>
</dbReference>
<dbReference type="GO" id="GO:0008270">
    <property type="term" value="F:zinc ion binding"/>
    <property type="evidence" value="ECO:0007669"/>
    <property type="project" value="UniProtKB-UniRule"/>
</dbReference>
<dbReference type="GO" id="GO:0019556">
    <property type="term" value="P:L-histidine catabolic process to glutamate and formamide"/>
    <property type="evidence" value="ECO:0007669"/>
    <property type="project" value="UniProtKB-UniPathway"/>
</dbReference>
<dbReference type="GO" id="GO:0019557">
    <property type="term" value="P:L-histidine catabolic process to glutamate and formate"/>
    <property type="evidence" value="ECO:0007669"/>
    <property type="project" value="UniProtKB-UniPathway"/>
</dbReference>
<dbReference type="CDD" id="cd01296">
    <property type="entry name" value="Imidazolone-5PH"/>
    <property type="match status" value="1"/>
</dbReference>
<dbReference type="FunFam" id="3.20.20.140:FF:000007">
    <property type="entry name" value="Imidazolonepropionase"/>
    <property type="match status" value="1"/>
</dbReference>
<dbReference type="Gene3D" id="3.20.20.140">
    <property type="entry name" value="Metal-dependent hydrolases"/>
    <property type="match status" value="1"/>
</dbReference>
<dbReference type="Gene3D" id="2.30.40.10">
    <property type="entry name" value="Urease, subunit C, domain 1"/>
    <property type="match status" value="1"/>
</dbReference>
<dbReference type="HAMAP" id="MF_00372">
    <property type="entry name" value="HutI"/>
    <property type="match status" value="1"/>
</dbReference>
<dbReference type="InterPro" id="IPR006680">
    <property type="entry name" value="Amidohydro-rel"/>
</dbReference>
<dbReference type="InterPro" id="IPR005920">
    <property type="entry name" value="HutI"/>
</dbReference>
<dbReference type="InterPro" id="IPR011059">
    <property type="entry name" value="Metal-dep_hydrolase_composite"/>
</dbReference>
<dbReference type="InterPro" id="IPR032466">
    <property type="entry name" value="Metal_Hydrolase"/>
</dbReference>
<dbReference type="NCBIfam" id="TIGR01224">
    <property type="entry name" value="hutI"/>
    <property type="match status" value="1"/>
</dbReference>
<dbReference type="PANTHER" id="PTHR42752">
    <property type="entry name" value="IMIDAZOLONEPROPIONASE"/>
    <property type="match status" value="1"/>
</dbReference>
<dbReference type="PANTHER" id="PTHR42752:SF1">
    <property type="entry name" value="IMIDAZOLONEPROPIONASE-RELATED"/>
    <property type="match status" value="1"/>
</dbReference>
<dbReference type="Pfam" id="PF01979">
    <property type="entry name" value="Amidohydro_1"/>
    <property type="match status" value="1"/>
</dbReference>
<dbReference type="SUPFAM" id="SSF51338">
    <property type="entry name" value="Composite domain of metallo-dependent hydrolases"/>
    <property type="match status" value="1"/>
</dbReference>
<dbReference type="SUPFAM" id="SSF51556">
    <property type="entry name" value="Metallo-dependent hydrolases"/>
    <property type="match status" value="1"/>
</dbReference>
<proteinExistence type="inferred from homology"/>
<reference key="1">
    <citation type="journal article" date="2011" name="Stand. Genomic Sci.">
        <title>Complete genome sequence of the filamentous gliding predatory bacterium Herpetosiphon aurantiacus type strain (114-95(T)).</title>
        <authorList>
            <person name="Kiss H."/>
            <person name="Nett M."/>
            <person name="Domin N."/>
            <person name="Martin K."/>
            <person name="Maresca J.A."/>
            <person name="Copeland A."/>
            <person name="Lapidus A."/>
            <person name="Lucas S."/>
            <person name="Berry K.W."/>
            <person name="Glavina Del Rio T."/>
            <person name="Dalin E."/>
            <person name="Tice H."/>
            <person name="Pitluck S."/>
            <person name="Richardson P."/>
            <person name="Bruce D."/>
            <person name="Goodwin L."/>
            <person name="Han C."/>
            <person name="Detter J.C."/>
            <person name="Schmutz J."/>
            <person name="Brettin T."/>
            <person name="Land M."/>
            <person name="Hauser L."/>
            <person name="Kyrpides N.C."/>
            <person name="Ivanova N."/>
            <person name="Goeker M."/>
            <person name="Woyke T."/>
            <person name="Klenk H.P."/>
            <person name="Bryant D.A."/>
        </authorList>
    </citation>
    <scope>NUCLEOTIDE SEQUENCE [LARGE SCALE GENOMIC DNA]</scope>
    <source>
        <strain>ATCC 23779 / DSM 785 / 114-95</strain>
    </source>
</reference>
<protein>
    <recommendedName>
        <fullName evidence="1">Imidazolonepropionase</fullName>
        <ecNumber evidence="1">3.5.2.7</ecNumber>
    </recommendedName>
    <alternativeName>
        <fullName evidence="1">Imidazolone-5-propionate hydrolase</fullName>
    </alternativeName>
</protein>
<evidence type="ECO:0000255" key="1">
    <source>
        <dbReference type="HAMAP-Rule" id="MF_00372"/>
    </source>
</evidence>
<name>HUTI_HERA2</name>